<sequence length="176" mass="19349">MDLPGPIHEILVLFGGFVLLLGGLGVVLLTNPTFSAFSLGLVLVCISLFYILLNSYFVAVAQLLIYVGAINVLIIFAVMFVNGSEWSKDKNFWTIGDGFTSLVCITIPFSLMTTIPDTSWYGILWTTRSNQIVEQGLINNVQQIGIHLATDFYLPFELISIILLVSLIGAITMARQ</sequence>
<name>NU6C_ORYNI</name>
<evidence type="ECO:0000250" key="1"/>
<evidence type="ECO:0000255" key="2"/>
<evidence type="ECO:0000305" key="3"/>
<evidence type="ECO:0000312" key="4">
    <source>
        <dbReference type="Proteomes" id="UP000006591"/>
    </source>
</evidence>
<gene>
    <name type="primary">ndhG</name>
</gene>
<comment type="function">
    <text evidence="1">NDH shuttles electrons from NAD(P)H:plastoquinone, via FMN and iron-sulfur (Fe-S) centers, to quinones in the photosynthetic chain and possibly in a chloroplast respiratory chain. The immediate electron acceptor for the enzyme in this species is believed to be plastoquinone. Couples the redox reaction to proton translocation, and thus conserves the redox energy in a proton gradient (By similarity).</text>
</comment>
<comment type="catalytic activity">
    <reaction>
        <text>a plastoquinone + NADH + (n+1) H(+)(in) = a plastoquinol + NAD(+) + n H(+)(out)</text>
        <dbReference type="Rhea" id="RHEA:42608"/>
        <dbReference type="Rhea" id="RHEA-COMP:9561"/>
        <dbReference type="Rhea" id="RHEA-COMP:9562"/>
        <dbReference type="ChEBI" id="CHEBI:15378"/>
        <dbReference type="ChEBI" id="CHEBI:17757"/>
        <dbReference type="ChEBI" id="CHEBI:57540"/>
        <dbReference type="ChEBI" id="CHEBI:57945"/>
        <dbReference type="ChEBI" id="CHEBI:62192"/>
    </reaction>
</comment>
<comment type="catalytic activity">
    <reaction>
        <text>a plastoquinone + NADPH + (n+1) H(+)(in) = a plastoquinol + NADP(+) + n H(+)(out)</text>
        <dbReference type="Rhea" id="RHEA:42612"/>
        <dbReference type="Rhea" id="RHEA-COMP:9561"/>
        <dbReference type="Rhea" id="RHEA-COMP:9562"/>
        <dbReference type="ChEBI" id="CHEBI:15378"/>
        <dbReference type="ChEBI" id="CHEBI:17757"/>
        <dbReference type="ChEBI" id="CHEBI:57783"/>
        <dbReference type="ChEBI" id="CHEBI:58349"/>
        <dbReference type="ChEBI" id="CHEBI:62192"/>
    </reaction>
</comment>
<comment type="subunit">
    <text evidence="1">NDH is composed of at least 16 different subunits, 5 of which are encoded in the nucleus.</text>
</comment>
<comment type="subcellular location">
    <subcellularLocation>
        <location evidence="1">Plastid</location>
        <location evidence="1">Chloroplast thylakoid membrane</location>
        <topology evidence="1">Multi-pass membrane protein</topology>
    </subcellularLocation>
</comment>
<comment type="similarity">
    <text evidence="3">Belongs to the complex I subunit 6 family.</text>
</comment>
<keyword id="KW-0150">Chloroplast</keyword>
<keyword id="KW-0472">Membrane</keyword>
<keyword id="KW-0520">NAD</keyword>
<keyword id="KW-0521">NADP</keyword>
<keyword id="KW-0934">Plastid</keyword>
<keyword id="KW-0618">Plastoquinone</keyword>
<keyword id="KW-0874">Quinone</keyword>
<keyword id="KW-1185">Reference proteome</keyword>
<keyword id="KW-0793">Thylakoid</keyword>
<keyword id="KW-1278">Translocase</keyword>
<keyword id="KW-0812">Transmembrane</keyword>
<keyword id="KW-1133">Transmembrane helix</keyword>
<keyword id="KW-0813">Transport</keyword>
<reference key="1">
    <citation type="journal article" date="2004" name="Gene">
        <title>The complete nucleotide sequence of wild rice (Oryza nivara) chloroplast genome: first genome wide comparative sequence analysis of wild and cultivated rice.</title>
        <authorList>
            <person name="Masood M.S."/>
            <person name="Nishikawa T."/>
            <person name="Fukuoka S."/>
            <person name="Njenga P.K."/>
            <person name="Tsudzuki T."/>
            <person name="Kadowaki K."/>
        </authorList>
    </citation>
    <scope>NUCLEOTIDE SEQUENCE [LARGE SCALE GENOMIC DNA]</scope>
    <source>
        <strain evidence="4">cv. SL10</strain>
    </source>
</reference>
<organism>
    <name type="scientific">Oryza nivara</name>
    <name type="common">Indian wild rice</name>
    <name type="synonym">Oryza sativa f. spontanea</name>
    <dbReference type="NCBI Taxonomy" id="4536"/>
    <lineage>
        <taxon>Eukaryota</taxon>
        <taxon>Viridiplantae</taxon>
        <taxon>Streptophyta</taxon>
        <taxon>Embryophyta</taxon>
        <taxon>Tracheophyta</taxon>
        <taxon>Spermatophyta</taxon>
        <taxon>Magnoliopsida</taxon>
        <taxon>Liliopsida</taxon>
        <taxon>Poales</taxon>
        <taxon>Poaceae</taxon>
        <taxon>BOP clade</taxon>
        <taxon>Oryzoideae</taxon>
        <taxon>Oryzeae</taxon>
        <taxon>Oryzinae</taxon>
        <taxon>Oryza</taxon>
    </lineage>
</organism>
<dbReference type="EC" id="7.1.1.-"/>
<dbReference type="EMBL" id="AP006728">
    <property type="protein sequence ID" value="BAD26848.1"/>
    <property type="molecule type" value="Genomic_DNA"/>
</dbReference>
<dbReference type="RefSeq" id="YP_052818.1">
    <property type="nucleotide sequence ID" value="NC_005973.1"/>
</dbReference>
<dbReference type="SMR" id="Q6ENA4"/>
<dbReference type="STRING" id="4536.Q6ENA4"/>
<dbReference type="GeneID" id="2885911"/>
<dbReference type="Proteomes" id="UP000006591">
    <property type="component" value="Chloroplast"/>
</dbReference>
<dbReference type="GO" id="GO:0009535">
    <property type="term" value="C:chloroplast thylakoid membrane"/>
    <property type="evidence" value="ECO:0007669"/>
    <property type="project" value="UniProtKB-SubCell"/>
</dbReference>
<dbReference type="GO" id="GO:0009536">
    <property type="term" value="C:plastid"/>
    <property type="evidence" value="ECO:0000305"/>
    <property type="project" value="Gramene"/>
</dbReference>
<dbReference type="GO" id="GO:0008137">
    <property type="term" value="F:NADH dehydrogenase (ubiquinone) activity"/>
    <property type="evidence" value="ECO:0007669"/>
    <property type="project" value="InterPro"/>
</dbReference>
<dbReference type="GO" id="GO:0048038">
    <property type="term" value="F:quinone binding"/>
    <property type="evidence" value="ECO:0007669"/>
    <property type="project" value="UniProtKB-KW"/>
</dbReference>
<dbReference type="FunFam" id="1.20.120.1200:FF:000002">
    <property type="entry name" value="NAD(P)H-quinone oxidoreductase subunit 6, chloroplastic"/>
    <property type="match status" value="1"/>
</dbReference>
<dbReference type="Gene3D" id="1.20.120.1200">
    <property type="entry name" value="NADH-ubiquinone/plastoquinone oxidoreductase chain 6, subunit NuoJ"/>
    <property type="match status" value="1"/>
</dbReference>
<dbReference type="InterPro" id="IPR050290">
    <property type="entry name" value="NAD(P)H-Q_Oxidoreduct_6"/>
</dbReference>
<dbReference type="InterPro" id="IPR001457">
    <property type="entry name" value="NADH_UbQ/plastoQ_OxRdtase_su6"/>
</dbReference>
<dbReference type="InterPro" id="IPR042106">
    <property type="entry name" value="Nuo/plastoQ_OxRdtase_6_NuoJ"/>
</dbReference>
<dbReference type="PANTHER" id="PTHR48479">
    <property type="entry name" value="NAD(P)H-QUINONE OXIDOREDUCTASE SUBUNIT 6, CHLOROPLASTIC"/>
    <property type="match status" value="1"/>
</dbReference>
<dbReference type="PANTHER" id="PTHR48479:SF1">
    <property type="entry name" value="NAD(P)H-QUINONE OXIDOREDUCTASE SUBUNIT 6, CHLOROPLASTIC"/>
    <property type="match status" value="1"/>
</dbReference>
<dbReference type="Pfam" id="PF00499">
    <property type="entry name" value="Oxidored_q3"/>
    <property type="match status" value="1"/>
</dbReference>
<proteinExistence type="inferred from homology"/>
<feature type="chain" id="PRO_0000118360" description="NAD(P)H-quinone oxidoreductase subunit 6, chloroplastic">
    <location>
        <begin position="1"/>
        <end position="176"/>
    </location>
</feature>
<feature type="transmembrane region" description="Helical" evidence="2">
    <location>
        <begin position="10"/>
        <end position="30"/>
    </location>
</feature>
<feature type="transmembrane region" description="Helical" evidence="2">
    <location>
        <begin position="33"/>
        <end position="53"/>
    </location>
</feature>
<feature type="transmembrane region" description="Helical" evidence="2">
    <location>
        <begin position="60"/>
        <end position="80"/>
    </location>
</feature>
<feature type="transmembrane region" description="Helical" evidence="2">
    <location>
        <begin position="92"/>
        <end position="112"/>
    </location>
</feature>
<feature type="transmembrane region" description="Helical" evidence="2">
    <location>
        <begin position="152"/>
        <end position="172"/>
    </location>
</feature>
<geneLocation type="chloroplast"/>
<accession>Q6ENA4</accession>
<protein>
    <recommendedName>
        <fullName>NAD(P)H-quinone oxidoreductase subunit 6, chloroplastic</fullName>
        <ecNumber>7.1.1.-</ecNumber>
    </recommendedName>
    <alternativeName>
        <fullName>NAD(P)H dehydrogenase subunit 6</fullName>
    </alternativeName>
    <alternativeName>
        <fullName>NADH-plastoquinone oxidoreductase subunit 6</fullName>
    </alternativeName>
</protein>